<proteinExistence type="evidence at protein level"/>
<sequence length="339" mass="37232">MPSVIVVGGQWGDEGKGSIVAYLSLHDEPEIIARGGVGTNAGHSVVINGKKYAVRQIPTGFMQTKARLLIGAGVLVDPEVFFHELEQLKDFNVKDRVGIDYRCAIIEEKHKQLDRTNGYLHGKIGTTGSGCGPANADRVMRKAKQAKDVKELEPYLTDVAQEINDALDEGSLVLVEGTQGFGLSLYYGTYPYVTSKDVTASSVAADVGIGPTRVDEVIVVFKSFPTRVGAGPFPTEMPMEEADRLGLVEYGTVTGRRRRVGWFDFEMARYSARINGATMLAVTMLDKYDKEAFGVTDYDKLPRKAKEFIEEIEERVGVPVGLIKTGPELEHIIDRRDTI</sequence>
<gene>
    <name evidence="1" type="primary">purA</name>
    <name type="ordered locus">PH0438</name>
</gene>
<name>PURA_PYRHO</name>
<comment type="function">
    <text evidence="1">Plays an important role in the de novo pathway of purine nucleotide biosynthesis. Catalyzes the first committed step in the biosynthesis of AMP from IMP.</text>
</comment>
<comment type="catalytic activity">
    <reaction evidence="1">
        <text>IMP + L-aspartate + GTP = N(6)-(1,2-dicarboxyethyl)-AMP + GDP + phosphate + 2 H(+)</text>
        <dbReference type="Rhea" id="RHEA:15753"/>
        <dbReference type="ChEBI" id="CHEBI:15378"/>
        <dbReference type="ChEBI" id="CHEBI:29991"/>
        <dbReference type="ChEBI" id="CHEBI:37565"/>
        <dbReference type="ChEBI" id="CHEBI:43474"/>
        <dbReference type="ChEBI" id="CHEBI:57567"/>
        <dbReference type="ChEBI" id="CHEBI:58053"/>
        <dbReference type="ChEBI" id="CHEBI:58189"/>
        <dbReference type="EC" id="6.3.4.4"/>
    </reaction>
</comment>
<comment type="cofactor">
    <cofactor evidence="1">
        <name>Mg(2+)</name>
        <dbReference type="ChEBI" id="CHEBI:18420"/>
    </cofactor>
    <text evidence="1">Binds 1 Mg(2+) ion per subunit.</text>
</comment>
<comment type="pathway">
    <text evidence="1">Purine metabolism; AMP biosynthesis via de novo pathway; AMP from IMP: step 1/2.</text>
</comment>
<comment type="subunit">
    <text evidence="1">Homodimer.</text>
</comment>
<comment type="subcellular location">
    <subcellularLocation>
        <location evidence="1">Cytoplasm</location>
    </subcellularLocation>
</comment>
<comment type="similarity">
    <text evidence="1">Belongs to the adenylosuccinate synthetase family.</text>
</comment>
<evidence type="ECO:0000255" key="1">
    <source>
        <dbReference type="HAMAP-Rule" id="MF_00011"/>
    </source>
</evidence>
<evidence type="ECO:0007829" key="2">
    <source>
        <dbReference type="PDB" id="2D7U"/>
    </source>
</evidence>
<evidence type="ECO:0007829" key="3">
    <source>
        <dbReference type="PDB" id="5K7X"/>
    </source>
</evidence>
<dbReference type="EC" id="6.3.4.4" evidence="1"/>
<dbReference type="EMBL" id="BA000001">
    <property type="protein sequence ID" value="BAA29524.1"/>
    <property type="molecule type" value="Genomic_DNA"/>
</dbReference>
<dbReference type="PIR" id="G71154">
    <property type="entry name" value="G71154"/>
</dbReference>
<dbReference type="RefSeq" id="WP_010884548.1">
    <property type="nucleotide sequence ID" value="NC_000961.1"/>
</dbReference>
<dbReference type="PDB" id="2D7U">
    <property type="method" value="X-ray"/>
    <property type="resolution" value="2.50 A"/>
    <property type="chains" value="A=1-339"/>
</dbReference>
<dbReference type="PDB" id="5K7X">
    <property type="method" value="X-ray"/>
    <property type="resolution" value="2.80 A"/>
    <property type="chains" value="A/B/C/D/E/F=1-339"/>
</dbReference>
<dbReference type="PDBsum" id="2D7U"/>
<dbReference type="PDBsum" id="5K7X"/>
<dbReference type="SMR" id="O58187"/>
<dbReference type="STRING" id="70601.gene:9377369"/>
<dbReference type="EnsemblBacteria" id="BAA29524">
    <property type="protein sequence ID" value="BAA29524"/>
    <property type="gene ID" value="BAA29524"/>
</dbReference>
<dbReference type="GeneID" id="1444335"/>
<dbReference type="KEGG" id="pho:PH0438"/>
<dbReference type="eggNOG" id="arCOG04387">
    <property type="taxonomic scope" value="Archaea"/>
</dbReference>
<dbReference type="OrthoDB" id="372247at2157"/>
<dbReference type="BRENDA" id="6.3.4.4">
    <property type="organism ID" value="5244"/>
</dbReference>
<dbReference type="UniPathway" id="UPA00075">
    <property type="reaction ID" value="UER00335"/>
</dbReference>
<dbReference type="EvolutionaryTrace" id="O58187"/>
<dbReference type="Proteomes" id="UP000000752">
    <property type="component" value="Chromosome"/>
</dbReference>
<dbReference type="GO" id="GO:0005737">
    <property type="term" value="C:cytoplasm"/>
    <property type="evidence" value="ECO:0007669"/>
    <property type="project" value="UniProtKB-SubCell"/>
</dbReference>
<dbReference type="GO" id="GO:0004019">
    <property type="term" value="F:adenylosuccinate synthase activity"/>
    <property type="evidence" value="ECO:0007669"/>
    <property type="project" value="UniProtKB-UniRule"/>
</dbReference>
<dbReference type="GO" id="GO:0005525">
    <property type="term" value="F:GTP binding"/>
    <property type="evidence" value="ECO:0007669"/>
    <property type="project" value="UniProtKB-UniRule"/>
</dbReference>
<dbReference type="GO" id="GO:0000287">
    <property type="term" value="F:magnesium ion binding"/>
    <property type="evidence" value="ECO:0007669"/>
    <property type="project" value="UniProtKB-UniRule"/>
</dbReference>
<dbReference type="GO" id="GO:0044208">
    <property type="term" value="P:'de novo' AMP biosynthetic process"/>
    <property type="evidence" value="ECO:0007669"/>
    <property type="project" value="UniProtKB-UniRule"/>
</dbReference>
<dbReference type="GO" id="GO:0046040">
    <property type="term" value="P:IMP metabolic process"/>
    <property type="evidence" value="ECO:0007669"/>
    <property type="project" value="TreeGrafter"/>
</dbReference>
<dbReference type="CDD" id="cd03108">
    <property type="entry name" value="AdSS"/>
    <property type="match status" value="1"/>
</dbReference>
<dbReference type="FunFam" id="3.40.440.10:FF:000005">
    <property type="entry name" value="Adenylosuccinate synthetase"/>
    <property type="match status" value="1"/>
</dbReference>
<dbReference type="FunFam" id="3.40.440.10:FF:000007">
    <property type="entry name" value="Adenylosuccinate synthetase"/>
    <property type="match status" value="1"/>
</dbReference>
<dbReference type="FunFam" id="3.90.170.10:FF:000002">
    <property type="entry name" value="Adenylosuccinate synthetase"/>
    <property type="match status" value="1"/>
</dbReference>
<dbReference type="Gene3D" id="3.40.440.10">
    <property type="entry name" value="Adenylosuccinate Synthetase, subunit A, domain 1"/>
    <property type="match status" value="2"/>
</dbReference>
<dbReference type="Gene3D" id="1.10.300.10">
    <property type="entry name" value="Adenylosuccinate Synthetase, subunit A, domain 2"/>
    <property type="match status" value="1"/>
</dbReference>
<dbReference type="Gene3D" id="3.90.170.10">
    <property type="entry name" value="Adenylosuccinate Synthetase, subunit A, domain 3"/>
    <property type="match status" value="2"/>
</dbReference>
<dbReference type="HAMAP" id="MF_00011">
    <property type="entry name" value="Adenylosucc_synth"/>
    <property type="match status" value="1"/>
</dbReference>
<dbReference type="InterPro" id="IPR018220">
    <property type="entry name" value="Adenylosuccin_syn_GTP-bd"/>
</dbReference>
<dbReference type="InterPro" id="IPR042109">
    <property type="entry name" value="Adenylosuccinate_synth_dom1"/>
</dbReference>
<dbReference type="InterPro" id="IPR042110">
    <property type="entry name" value="Adenylosuccinate_synth_dom2"/>
</dbReference>
<dbReference type="InterPro" id="IPR042111">
    <property type="entry name" value="Adenylosuccinate_synth_dom3"/>
</dbReference>
<dbReference type="InterPro" id="IPR001114">
    <property type="entry name" value="Adenylosuccinate_synthetase"/>
</dbReference>
<dbReference type="InterPro" id="IPR027417">
    <property type="entry name" value="P-loop_NTPase"/>
</dbReference>
<dbReference type="NCBIfam" id="NF003295">
    <property type="entry name" value="PRK04293.1"/>
    <property type="match status" value="1"/>
</dbReference>
<dbReference type="PANTHER" id="PTHR11846">
    <property type="entry name" value="ADENYLOSUCCINATE SYNTHETASE"/>
    <property type="match status" value="1"/>
</dbReference>
<dbReference type="PANTHER" id="PTHR11846:SF0">
    <property type="entry name" value="ADENYLOSUCCINATE SYNTHETASE"/>
    <property type="match status" value="1"/>
</dbReference>
<dbReference type="Pfam" id="PF00709">
    <property type="entry name" value="Adenylsucc_synt"/>
    <property type="match status" value="1"/>
</dbReference>
<dbReference type="SMART" id="SM00788">
    <property type="entry name" value="Adenylsucc_synt"/>
    <property type="match status" value="1"/>
</dbReference>
<dbReference type="SUPFAM" id="SSF52540">
    <property type="entry name" value="P-loop containing nucleoside triphosphate hydrolases"/>
    <property type="match status" value="1"/>
</dbReference>
<dbReference type="PROSITE" id="PS01266">
    <property type="entry name" value="ADENYLOSUCCIN_SYN_1"/>
    <property type="match status" value="1"/>
</dbReference>
<keyword id="KW-0002">3D-structure</keyword>
<keyword id="KW-0963">Cytoplasm</keyword>
<keyword id="KW-0342">GTP-binding</keyword>
<keyword id="KW-0436">Ligase</keyword>
<keyword id="KW-0460">Magnesium</keyword>
<keyword id="KW-0479">Metal-binding</keyword>
<keyword id="KW-0547">Nucleotide-binding</keyword>
<keyword id="KW-0658">Purine biosynthesis</keyword>
<accession>O58187</accession>
<feature type="chain" id="PRO_0000095277" description="Adenylosuccinate synthetase">
    <location>
        <begin position="1"/>
        <end position="339"/>
    </location>
</feature>
<feature type="active site" description="Proton acceptor" evidence="1">
    <location>
        <position position="13"/>
    </location>
</feature>
<feature type="active site" description="Proton donor" evidence="1">
    <location>
        <position position="43"/>
    </location>
</feature>
<feature type="binding site" evidence="1">
    <location>
        <begin position="12"/>
        <end position="18"/>
    </location>
    <ligand>
        <name>GTP</name>
        <dbReference type="ChEBI" id="CHEBI:37565"/>
    </ligand>
</feature>
<feature type="binding site" description="in other chain" evidence="1">
    <location>
        <begin position="13"/>
        <end position="16"/>
    </location>
    <ligand>
        <name>IMP</name>
        <dbReference type="ChEBI" id="CHEBI:58053"/>
        <note>ligand shared between dimeric partners</note>
    </ligand>
</feature>
<feature type="binding site" evidence="1">
    <location>
        <position position="13"/>
    </location>
    <ligand>
        <name>Mg(2+)</name>
        <dbReference type="ChEBI" id="CHEBI:18420"/>
    </ligand>
</feature>
<feature type="binding site" description="in other chain" evidence="1">
    <location>
        <begin position="40"/>
        <end position="43"/>
    </location>
    <ligand>
        <name>IMP</name>
        <dbReference type="ChEBI" id="CHEBI:58053"/>
        <note>ligand shared between dimeric partners</note>
    </ligand>
</feature>
<feature type="binding site" evidence="1">
    <location>
        <begin position="42"/>
        <end position="44"/>
    </location>
    <ligand>
        <name>GTP</name>
        <dbReference type="ChEBI" id="CHEBI:37565"/>
    </ligand>
</feature>
<feature type="binding site" evidence="1">
    <location>
        <position position="42"/>
    </location>
    <ligand>
        <name>Mg(2+)</name>
        <dbReference type="ChEBI" id="CHEBI:18420"/>
    </ligand>
</feature>
<feature type="binding site" description="in other chain" evidence="1">
    <location>
        <position position="127"/>
    </location>
    <ligand>
        <name>IMP</name>
        <dbReference type="ChEBI" id="CHEBI:58053"/>
        <note>ligand shared between dimeric partners</note>
    </ligand>
</feature>
<feature type="binding site" evidence="1">
    <location>
        <position position="141"/>
    </location>
    <ligand>
        <name>IMP</name>
        <dbReference type="ChEBI" id="CHEBI:58053"/>
        <note>ligand shared between dimeric partners</note>
    </ligand>
</feature>
<feature type="binding site" description="in other chain" evidence="1">
    <location>
        <position position="179"/>
    </location>
    <ligand>
        <name>IMP</name>
        <dbReference type="ChEBI" id="CHEBI:58053"/>
        <note>ligand shared between dimeric partners</note>
    </ligand>
</feature>
<feature type="binding site" description="in other chain" evidence="1">
    <location>
        <position position="194"/>
    </location>
    <ligand>
        <name>IMP</name>
        <dbReference type="ChEBI" id="CHEBI:58053"/>
        <note>ligand shared between dimeric partners</note>
    </ligand>
</feature>
<feature type="binding site" evidence="1">
    <location>
        <begin position="252"/>
        <end position="258"/>
    </location>
    <ligand>
        <name>substrate</name>
    </ligand>
</feature>
<feature type="binding site" description="in other chain" evidence="1">
    <location>
        <position position="256"/>
    </location>
    <ligand>
        <name>IMP</name>
        <dbReference type="ChEBI" id="CHEBI:58053"/>
        <note>ligand shared between dimeric partners</note>
    </ligand>
</feature>
<feature type="binding site" evidence="1">
    <location>
        <position position="258"/>
    </location>
    <ligand>
        <name>GTP</name>
        <dbReference type="ChEBI" id="CHEBI:37565"/>
    </ligand>
</feature>
<feature type="binding site" evidence="1">
    <location>
        <begin position="284"/>
        <end position="286"/>
    </location>
    <ligand>
        <name>GTP</name>
        <dbReference type="ChEBI" id="CHEBI:37565"/>
    </ligand>
</feature>
<feature type="binding site" evidence="1">
    <location>
        <begin position="324"/>
        <end position="326"/>
    </location>
    <ligand>
        <name>GTP</name>
        <dbReference type="ChEBI" id="CHEBI:37565"/>
    </ligand>
</feature>
<feature type="strand" evidence="2">
    <location>
        <begin position="4"/>
        <end position="12"/>
    </location>
</feature>
<feature type="helix" evidence="2">
    <location>
        <begin position="16"/>
        <end position="26"/>
    </location>
</feature>
<feature type="strand" evidence="2">
    <location>
        <begin position="30"/>
        <end position="34"/>
    </location>
</feature>
<feature type="strand" evidence="2">
    <location>
        <begin position="36"/>
        <end position="40"/>
    </location>
</feature>
<feature type="strand" evidence="2">
    <location>
        <begin position="43"/>
        <end position="47"/>
    </location>
</feature>
<feature type="strand" evidence="2">
    <location>
        <begin position="50"/>
        <end position="57"/>
    </location>
</feature>
<feature type="turn" evidence="2">
    <location>
        <begin position="59"/>
        <end position="62"/>
    </location>
</feature>
<feature type="strand" evidence="2">
    <location>
        <begin position="64"/>
        <end position="70"/>
    </location>
</feature>
<feature type="helix" evidence="2">
    <location>
        <begin position="78"/>
        <end position="87"/>
    </location>
</feature>
<feature type="helix" evidence="2">
    <location>
        <begin position="89"/>
        <end position="91"/>
    </location>
</feature>
<feature type="helix" evidence="2">
    <location>
        <begin position="93"/>
        <end position="95"/>
    </location>
</feature>
<feature type="strand" evidence="2">
    <location>
        <begin position="97"/>
        <end position="100"/>
    </location>
</feature>
<feature type="helix" evidence="2">
    <location>
        <begin position="108"/>
        <end position="111"/>
    </location>
</feature>
<feature type="helix" evidence="3">
    <location>
        <begin position="118"/>
        <end position="122"/>
    </location>
</feature>
<feature type="strand" evidence="3">
    <location>
        <begin position="128"/>
        <end position="130"/>
    </location>
</feature>
<feature type="helix" evidence="2">
    <location>
        <begin position="131"/>
        <end position="138"/>
    </location>
</feature>
<feature type="turn" evidence="2">
    <location>
        <begin position="139"/>
        <end position="141"/>
    </location>
</feature>
<feature type="helix" evidence="2">
    <location>
        <begin position="146"/>
        <end position="148"/>
    </location>
</feature>
<feature type="strand" evidence="2">
    <location>
        <begin position="150"/>
        <end position="153"/>
    </location>
</feature>
<feature type="helix" evidence="2">
    <location>
        <begin position="159"/>
        <end position="168"/>
    </location>
</feature>
<feature type="strand" evidence="2">
    <location>
        <begin position="173"/>
        <end position="180"/>
    </location>
</feature>
<feature type="helix" evidence="2">
    <location>
        <begin position="181"/>
        <end position="183"/>
    </location>
</feature>
<feature type="turn" evidence="2">
    <location>
        <begin position="185"/>
        <end position="187"/>
    </location>
</feature>
<feature type="helix" evidence="2">
    <location>
        <begin position="200"/>
        <end position="207"/>
    </location>
</feature>
<feature type="helix" evidence="2">
    <location>
        <begin position="211"/>
        <end position="213"/>
    </location>
</feature>
<feature type="strand" evidence="2">
    <location>
        <begin position="216"/>
        <end position="224"/>
    </location>
</feature>
<feature type="strand" evidence="2">
    <location>
        <begin position="229"/>
        <end position="231"/>
    </location>
</feature>
<feature type="helix" evidence="2">
    <location>
        <begin position="239"/>
        <end position="244"/>
    </location>
</feature>
<feature type="turn" evidence="2">
    <location>
        <begin position="252"/>
        <end position="254"/>
    </location>
</feature>
<feature type="strand" evidence="2">
    <location>
        <begin position="259"/>
        <end position="261"/>
    </location>
</feature>
<feature type="helix" evidence="2">
    <location>
        <begin position="265"/>
        <end position="274"/>
    </location>
</feature>
<feature type="strand" evidence="2">
    <location>
        <begin position="278"/>
        <end position="283"/>
    </location>
</feature>
<feature type="helix" evidence="2">
    <location>
        <begin position="285"/>
        <end position="287"/>
    </location>
</feature>
<feature type="helix" evidence="2">
    <location>
        <begin position="290"/>
        <end position="292"/>
    </location>
</feature>
<feature type="helix" evidence="2">
    <location>
        <begin position="298"/>
        <end position="300"/>
    </location>
</feature>
<feature type="helix" evidence="2">
    <location>
        <begin position="303"/>
        <end position="316"/>
    </location>
</feature>
<feature type="strand" evidence="2">
    <location>
        <begin position="320"/>
        <end position="324"/>
    </location>
</feature>
<feature type="strand" evidence="2">
    <location>
        <begin position="326"/>
        <end position="330"/>
    </location>
</feature>
<feature type="strand" evidence="2">
    <location>
        <begin position="332"/>
        <end position="334"/>
    </location>
</feature>
<reference key="1">
    <citation type="journal article" date="1998" name="DNA Res.">
        <title>Complete sequence and gene organization of the genome of a hyper-thermophilic archaebacterium, Pyrococcus horikoshii OT3.</title>
        <authorList>
            <person name="Kawarabayasi Y."/>
            <person name="Sawada M."/>
            <person name="Horikawa H."/>
            <person name="Haikawa Y."/>
            <person name="Hino Y."/>
            <person name="Yamamoto S."/>
            <person name="Sekine M."/>
            <person name="Baba S."/>
            <person name="Kosugi H."/>
            <person name="Hosoyama A."/>
            <person name="Nagai Y."/>
            <person name="Sakai M."/>
            <person name="Ogura K."/>
            <person name="Otsuka R."/>
            <person name="Nakazawa H."/>
            <person name="Takamiya M."/>
            <person name="Ohfuku Y."/>
            <person name="Funahashi T."/>
            <person name="Tanaka T."/>
            <person name="Kudoh Y."/>
            <person name="Yamazaki J."/>
            <person name="Kushida N."/>
            <person name="Oguchi A."/>
            <person name="Aoki K."/>
            <person name="Yoshizawa T."/>
            <person name="Nakamura Y."/>
            <person name="Robb F.T."/>
            <person name="Horikoshi K."/>
            <person name="Masuchi Y."/>
            <person name="Shizuya H."/>
            <person name="Kikuchi H."/>
        </authorList>
    </citation>
    <scope>NUCLEOTIDE SEQUENCE [LARGE SCALE GENOMIC DNA]</scope>
    <source>
        <strain>ATCC 700860 / DSM 12428 / JCM 9974 / NBRC 100139 / OT-3</strain>
    </source>
</reference>
<reference key="2">
    <citation type="submission" date="2006-05" db="PDB data bank">
        <title>Crystal structure of hypothetical adenylosuccinate synthetase, PH0438 from Pyrococcus horikoshii OT3.</title>
        <authorList>
            <consortium name="RIKEN structural genomics initiative (RSGI)"/>
        </authorList>
    </citation>
    <scope>X-RAY CRYSTALLOGRAPHY (2.5 ANGSTROMS)</scope>
</reference>
<organism>
    <name type="scientific">Pyrococcus horikoshii (strain ATCC 700860 / DSM 12428 / JCM 9974 / NBRC 100139 / OT-3)</name>
    <dbReference type="NCBI Taxonomy" id="70601"/>
    <lineage>
        <taxon>Archaea</taxon>
        <taxon>Methanobacteriati</taxon>
        <taxon>Methanobacteriota</taxon>
        <taxon>Thermococci</taxon>
        <taxon>Thermococcales</taxon>
        <taxon>Thermococcaceae</taxon>
        <taxon>Pyrococcus</taxon>
    </lineage>
</organism>
<protein>
    <recommendedName>
        <fullName evidence="1">Adenylosuccinate synthetase</fullName>
        <shortName evidence="1">AMPSase</shortName>
        <shortName evidence="1">AdSS</shortName>
        <ecNumber evidence="1">6.3.4.4</ecNumber>
    </recommendedName>
    <alternativeName>
        <fullName evidence="1">IMP--aspartate ligase</fullName>
    </alternativeName>
</protein>